<reference key="1">
    <citation type="submission" date="2009-01" db="EMBL/GenBank/DDBJ databases">
        <title>Complete sequence of chromosome of Caldicellulosiruptor becscii DSM 6725.</title>
        <authorList>
            <person name="Lucas S."/>
            <person name="Copeland A."/>
            <person name="Lapidus A."/>
            <person name="Glavina del Rio T."/>
            <person name="Tice H."/>
            <person name="Bruce D."/>
            <person name="Goodwin L."/>
            <person name="Pitluck S."/>
            <person name="Sims D."/>
            <person name="Meincke L."/>
            <person name="Brettin T."/>
            <person name="Detter J.C."/>
            <person name="Han C."/>
            <person name="Larimer F."/>
            <person name="Land M."/>
            <person name="Hauser L."/>
            <person name="Kyrpides N."/>
            <person name="Ovchinnikova G."/>
            <person name="Kataeva I."/>
            <person name="Adams M.W.W."/>
        </authorList>
    </citation>
    <scope>NUCLEOTIDE SEQUENCE [LARGE SCALE GENOMIC DNA]</scope>
    <source>
        <strain>ATCC BAA-1888 / DSM 6725 / KCTC 15123 / Z-1320</strain>
    </source>
</reference>
<proteinExistence type="inferred from homology"/>
<organism>
    <name type="scientific">Caldicellulosiruptor bescii (strain ATCC BAA-1888 / DSM 6725 / KCTC 15123 / Z-1320)</name>
    <name type="common">Anaerocellum thermophilum</name>
    <dbReference type="NCBI Taxonomy" id="521460"/>
    <lineage>
        <taxon>Bacteria</taxon>
        <taxon>Bacillati</taxon>
        <taxon>Bacillota</taxon>
        <taxon>Bacillota incertae sedis</taxon>
        <taxon>Caldicellulosiruptorales</taxon>
        <taxon>Caldicellulosiruptoraceae</taxon>
        <taxon>Caldicellulosiruptor</taxon>
    </lineage>
</organism>
<sequence>MANTKSAKKKIKVIRRRTIENKIQKFKMKKAIKEVKKALLSGDIEKAKELYSKAAKLIDQTAAKGVIHKNNASRKKSRLMKLINKYAALSSPQPESKAQ</sequence>
<comment type="function">
    <text evidence="1">Binds directly to 16S ribosomal RNA.</text>
</comment>
<comment type="similarity">
    <text evidence="1">Belongs to the bacterial ribosomal protein bS20 family.</text>
</comment>
<dbReference type="EMBL" id="CP001393">
    <property type="protein sequence ID" value="ACM61007.1"/>
    <property type="molecule type" value="Genomic_DNA"/>
</dbReference>
<dbReference type="RefSeq" id="WP_013291003.1">
    <property type="nucleotide sequence ID" value="NC_012034.1"/>
</dbReference>
<dbReference type="SMR" id="B9MKZ9"/>
<dbReference type="STRING" id="521460.Athe_1919"/>
<dbReference type="GeneID" id="31773268"/>
<dbReference type="KEGG" id="ate:Athe_1919"/>
<dbReference type="eggNOG" id="COG0268">
    <property type="taxonomic scope" value="Bacteria"/>
</dbReference>
<dbReference type="HOGENOM" id="CLU_160655_3_0_9"/>
<dbReference type="Proteomes" id="UP000007723">
    <property type="component" value="Chromosome"/>
</dbReference>
<dbReference type="GO" id="GO:0005829">
    <property type="term" value="C:cytosol"/>
    <property type="evidence" value="ECO:0007669"/>
    <property type="project" value="TreeGrafter"/>
</dbReference>
<dbReference type="GO" id="GO:0015935">
    <property type="term" value="C:small ribosomal subunit"/>
    <property type="evidence" value="ECO:0007669"/>
    <property type="project" value="TreeGrafter"/>
</dbReference>
<dbReference type="GO" id="GO:0070181">
    <property type="term" value="F:small ribosomal subunit rRNA binding"/>
    <property type="evidence" value="ECO:0007669"/>
    <property type="project" value="TreeGrafter"/>
</dbReference>
<dbReference type="GO" id="GO:0003735">
    <property type="term" value="F:structural constituent of ribosome"/>
    <property type="evidence" value="ECO:0007669"/>
    <property type="project" value="InterPro"/>
</dbReference>
<dbReference type="GO" id="GO:0006412">
    <property type="term" value="P:translation"/>
    <property type="evidence" value="ECO:0007669"/>
    <property type="project" value="UniProtKB-UniRule"/>
</dbReference>
<dbReference type="FunFam" id="1.20.58.110:FF:000001">
    <property type="entry name" value="30S ribosomal protein S20"/>
    <property type="match status" value="1"/>
</dbReference>
<dbReference type="Gene3D" id="1.20.58.110">
    <property type="entry name" value="Ribosomal protein S20"/>
    <property type="match status" value="1"/>
</dbReference>
<dbReference type="HAMAP" id="MF_00500">
    <property type="entry name" value="Ribosomal_bS20"/>
    <property type="match status" value="1"/>
</dbReference>
<dbReference type="InterPro" id="IPR002583">
    <property type="entry name" value="Ribosomal_bS20"/>
</dbReference>
<dbReference type="InterPro" id="IPR036510">
    <property type="entry name" value="Ribosomal_bS20_sf"/>
</dbReference>
<dbReference type="NCBIfam" id="TIGR00029">
    <property type="entry name" value="S20"/>
    <property type="match status" value="1"/>
</dbReference>
<dbReference type="PANTHER" id="PTHR33398">
    <property type="entry name" value="30S RIBOSOMAL PROTEIN S20"/>
    <property type="match status" value="1"/>
</dbReference>
<dbReference type="PANTHER" id="PTHR33398:SF1">
    <property type="entry name" value="SMALL RIBOSOMAL SUBUNIT PROTEIN BS20C"/>
    <property type="match status" value="1"/>
</dbReference>
<dbReference type="Pfam" id="PF01649">
    <property type="entry name" value="Ribosomal_S20p"/>
    <property type="match status" value="1"/>
</dbReference>
<dbReference type="SUPFAM" id="SSF46992">
    <property type="entry name" value="Ribosomal protein S20"/>
    <property type="match status" value="1"/>
</dbReference>
<gene>
    <name evidence="1" type="primary">rpsT</name>
    <name type="ordered locus">Athe_1919</name>
</gene>
<protein>
    <recommendedName>
        <fullName evidence="1">Small ribosomal subunit protein bS20</fullName>
    </recommendedName>
    <alternativeName>
        <fullName evidence="2">30S ribosomal protein S20</fullName>
    </alternativeName>
</protein>
<keyword id="KW-0687">Ribonucleoprotein</keyword>
<keyword id="KW-0689">Ribosomal protein</keyword>
<keyword id="KW-0694">RNA-binding</keyword>
<keyword id="KW-0699">rRNA-binding</keyword>
<name>RS20_CALBD</name>
<accession>B9MKZ9</accession>
<feature type="chain" id="PRO_1000135768" description="Small ribosomal subunit protein bS20">
    <location>
        <begin position="1"/>
        <end position="99"/>
    </location>
</feature>
<evidence type="ECO:0000255" key="1">
    <source>
        <dbReference type="HAMAP-Rule" id="MF_00500"/>
    </source>
</evidence>
<evidence type="ECO:0000305" key="2"/>